<dbReference type="EMBL" id="X90565">
    <property type="protein sequence ID" value="CAA62164.1"/>
    <property type="molecule type" value="Genomic_DNA"/>
</dbReference>
<dbReference type="EMBL" id="Z75217">
    <property type="protein sequence ID" value="CAA99629.1"/>
    <property type="molecule type" value="Genomic_DNA"/>
</dbReference>
<dbReference type="EMBL" id="AY693246">
    <property type="protein sequence ID" value="AAT93265.1"/>
    <property type="molecule type" value="Genomic_DNA"/>
</dbReference>
<dbReference type="PIR" id="S58321">
    <property type="entry name" value="S58321"/>
</dbReference>
<dbReference type="SMR" id="Q12444"/>
<dbReference type="DIP" id="DIP-5157N"/>
<dbReference type="IntAct" id="Q12444">
    <property type="interactions" value="2"/>
</dbReference>
<dbReference type="STRING" id="4932.YOR309C"/>
<dbReference type="PaxDb" id="4932-YOR309C"/>
<dbReference type="EnsemblFungi" id="YOR309C_mRNA">
    <property type="protein sequence ID" value="YOR309C"/>
    <property type="gene ID" value="YOR309C"/>
</dbReference>
<dbReference type="AGR" id="SGD:S000005836"/>
<dbReference type="SGD" id="S000005836">
    <property type="gene designation" value="YOR309C"/>
</dbReference>
<dbReference type="HOGENOM" id="CLU_2016999_0_0_1"/>
<sequence length="126" mass="16294">MQMLIPQRLLLILNPILMMKRKKRKKRKKRRERETMMKIPRILKKLRRKRRTRRKRRKRRKRRRRKRRKRRRKRSPRKRRKRRNKDAFYILIISDPSRSLLFGFRKFSIIIQCLTYFSFHILFHNL</sequence>
<organism>
    <name type="scientific">Saccharomyces cerevisiae (strain ATCC 204508 / S288c)</name>
    <name type="common">Baker's yeast</name>
    <dbReference type="NCBI Taxonomy" id="559292"/>
    <lineage>
        <taxon>Eukaryota</taxon>
        <taxon>Fungi</taxon>
        <taxon>Dikarya</taxon>
        <taxon>Ascomycota</taxon>
        <taxon>Saccharomycotina</taxon>
        <taxon>Saccharomycetes</taxon>
        <taxon>Saccharomycetales</taxon>
        <taxon>Saccharomycetaceae</taxon>
        <taxon>Saccharomyces</taxon>
    </lineage>
</organism>
<gene>
    <name type="ordered locus">YOR309C</name>
    <name type="ORF">06105</name>
</gene>
<protein>
    <recommendedName>
        <fullName>Putative uncharacterized protein YOR309C</fullName>
    </recommendedName>
</protein>
<comment type="miscellaneous">
    <text evidence="2">Partially overlaps NOP58.</text>
</comment>
<comment type="caution">
    <text evidence="3">Product of a dubious gene prediction unlikely to encode a functional protein. Because of that it is not part of the S.cerevisiae S288c complete/reference proteome set.</text>
</comment>
<reference key="1">
    <citation type="journal article" date="1996" name="Yeast">
        <title>Sequencing of a 35.71 kb DNA segment on the right arm of yeast chromosome XV reveals regions of similarity to chromosomes I and XIII.</title>
        <authorList>
            <person name="Pearson B.M."/>
            <person name="Hernando Y."/>
            <person name="Payne J."/>
            <person name="Wolf S.S."/>
            <person name="Kalogeropoulos A."/>
            <person name="Schweizer M."/>
        </authorList>
    </citation>
    <scope>NUCLEOTIDE SEQUENCE [GENOMIC DNA]</scope>
    <source>
        <strain>ATCC 96604 / S288c / FY1679</strain>
    </source>
</reference>
<reference key="2">
    <citation type="journal article" date="1997" name="Nature">
        <title>The nucleotide sequence of Saccharomyces cerevisiae chromosome XV.</title>
        <authorList>
            <person name="Dujon B."/>
            <person name="Albermann K."/>
            <person name="Aldea M."/>
            <person name="Alexandraki D."/>
            <person name="Ansorge W."/>
            <person name="Arino J."/>
            <person name="Benes V."/>
            <person name="Bohn C."/>
            <person name="Bolotin-Fukuhara M."/>
            <person name="Bordonne R."/>
            <person name="Boyer J."/>
            <person name="Camasses A."/>
            <person name="Casamayor A."/>
            <person name="Casas C."/>
            <person name="Cheret G."/>
            <person name="Cziepluch C."/>
            <person name="Daignan-Fornier B."/>
            <person name="Dang V.-D."/>
            <person name="de Haan M."/>
            <person name="Delius H."/>
            <person name="Durand P."/>
            <person name="Fairhead C."/>
            <person name="Feldmann H."/>
            <person name="Gaillon L."/>
            <person name="Galisson F."/>
            <person name="Gamo F.-J."/>
            <person name="Gancedo C."/>
            <person name="Goffeau A."/>
            <person name="Goulding S.E."/>
            <person name="Grivell L.A."/>
            <person name="Habbig B."/>
            <person name="Hand N.J."/>
            <person name="Hani J."/>
            <person name="Hattenhorst U."/>
            <person name="Hebling U."/>
            <person name="Hernando Y."/>
            <person name="Herrero E."/>
            <person name="Heumann K."/>
            <person name="Hiesel R."/>
            <person name="Hilger F."/>
            <person name="Hofmann B."/>
            <person name="Hollenberg C.P."/>
            <person name="Hughes B."/>
            <person name="Jauniaux J.-C."/>
            <person name="Kalogeropoulos A."/>
            <person name="Katsoulou C."/>
            <person name="Kordes E."/>
            <person name="Lafuente M.J."/>
            <person name="Landt O."/>
            <person name="Louis E.J."/>
            <person name="Maarse A.C."/>
            <person name="Madania A."/>
            <person name="Mannhaupt G."/>
            <person name="Marck C."/>
            <person name="Martin R.P."/>
            <person name="Mewes H.-W."/>
            <person name="Michaux G."/>
            <person name="Paces V."/>
            <person name="Parle-McDermott A.G."/>
            <person name="Pearson B.M."/>
            <person name="Perrin A."/>
            <person name="Pettersson B."/>
            <person name="Poch O."/>
            <person name="Pohl T.M."/>
            <person name="Poirey R."/>
            <person name="Portetelle D."/>
            <person name="Pujol A."/>
            <person name="Purnelle B."/>
            <person name="Ramezani Rad M."/>
            <person name="Rechmann S."/>
            <person name="Schwager C."/>
            <person name="Schweizer M."/>
            <person name="Sor F."/>
            <person name="Sterky F."/>
            <person name="Tarassov I.A."/>
            <person name="Teodoru C."/>
            <person name="Tettelin H."/>
            <person name="Thierry A."/>
            <person name="Tobiasch E."/>
            <person name="Tzermia M."/>
            <person name="Uhlen M."/>
            <person name="Unseld M."/>
            <person name="Valens M."/>
            <person name="Vandenbol M."/>
            <person name="Vetter I."/>
            <person name="Vlcek C."/>
            <person name="Voet M."/>
            <person name="Volckaert G."/>
            <person name="Voss H."/>
            <person name="Wambutt R."/>
            <person name="Wedler H."/>
            <person name="Wiemann S."/>
            <person name="Winsor B."/>
            <person name="Wolfe K.H."/>
            <person name="Zollner A."/>
            <person name="Zumstein E."/>
            <person name="Kleine K."/>
        </authorList>
    </citation>
    <scope>NUCLEOTIDE SEQUENCE [LARGE SCALE GENOMIC DNA]</scope>
    <source>
        <strain>ATCC 204508 / S288c</strain>
    </source>
</reference>
<reference key="3">
    <citation type="journal article" date="2014" name="G3 (Bethesda)">
        <title>The reference genome sequence of Saccharomyces cerevisiae: Then and now.</title>
        <authorList>
            <person name="Engel S.R."/>
            <person name="Dietrich F.S."/>
            <person name="Fisk D.G."/>
            <person name="Binkley G."/>
            <person name="Balakrishnan R."/>
            <person name="Costanzo M.C."/>
            <person name="Dwight S.S."/>
            <person name="Hitz B.C."/>
            <person name="Karra K."/>
            <person name="Nash R.S."/>
            <person name="Weng S."/>
            <person name="Wong E.D."/>
            <person name="Lloyd P."/>
            <person name="Skrzypek M.S."/>
            <person name="Miyasato S.R."/>
            <person name="Simison M."/>
            <person name="Cherry J.M."/>
        </authorList>
    </citation>
    <scope>GENOME REANNOTATION</scope>
    <source>
        <strain>ATCC 204508 / S288c</strain>
    </source>
</reference>
<reference key="4">
    <citation type="journal article" date="2007" name="Genome Res.">
        <title>Approaching a complete repository of sequence-verified protein-encoding clones for Saccharomyces cerevisiae.</title>
        <authorList>
            <person name="Hu Y."/>
            <person name="Rolfs A."/>
            <person name="Bhullar B."/>
            <person name="Murthy T.V.S."/>
            <person name="Zhu C."/>
            <person name="Berger M.F."/>
            <person name="Camargo A.A."/>
            <person name="Kelley F."/>
            <person name="McCarron S."/>
            <person name="Jepson D."/>
            <person name="Richardson A."/>
            <person name="Raphael J."/>
            <person name="Moreira D."/>
            <person name="Taycher E."/>
            <person name="Zuo D."/>
            <person name="Mohr S."/>
            <person name="Kane M.F."/>
            <person name="Williamson J."/>
            <person name="Simpson A.J.G."/>
            <person name="Bulyk M.L."/>
            <person name="Harlow E."/>
            <person name="Marsischky G."/>
            <person name="Kolodner R.D."/>
            <person name="LaBaer J."/>
        </authorList>
    </citation>
    <scope>NUCLEOTIDE SEQUENCE [GENOMIC DNA]</scope>
    <source>
        <strain>ATCC 204508 / S288c</strain>
    </source>
</reference>
<name>YO309_YEAST</name>
<proteinExistence type="uncertain"/>
<evidence type="ECO:0000256" key="1">
    <source>
        <dbReference type="SAM" id="MobiDB-lite"/>
    </source>
</evidence>
<evidence type="ECO:0000305" key="2"/>
<evidence type="ECO:0000305" key="3">
    <source>
    </source>
</evidence>
<accession>Q12444</accession>
<feature type="chain" id="PRO_0000299734" description="Putative uncharacterized protein YOR309C">
    <location>
        <begin position="1"/>
        <end position="126"/>
    </location>
</feature>
<feature type="region of interest" description="Disordered" evidence="1">
    <location>
        <begin position="21"/>
        <end position="83"/>
    </location>
</feature>
<feature type="compositionally biased region" description="Basic residues" evidence="1">
    <location>
        <begin position="21"/>
        <end position="31"/>
    </location>
</feature>
<feature type="compositionally biased region" description="Basic residues" evidence="1">
    <location>
        <begin position="41"/>
        <end position="83"/>
    </location>
</feature>